<feature type="chain" id="PRO_0000461785" description="Madf and zinc finger protein 1">
    <location>
        <begin position="1"/>
        <end position="586"/>
    </location>
</feature>
<feature type="DNA-binding region" description="MADF 1" evidence="2">
    <location>
        <begin position="201"/>
        <end position="292"/>
    </location>
</feature>
<feature type="DNA-binding region" description="MADF 2" evidence="2">
    <location>
        <begin position="320"/>
        <end position="413"/>
    </location>
</feature>
<feature type="zinc finger region" description="C2H2-type 1" evidence="1">
    <location>
        <begin position="418"/>
        <end position="441"/>
    </location>
</feature>
<feature type="zinc finger region" description="C2H2-type 2" evidence="1">
    <location>
        <begin position="448"/>
        <end position="471"/>
    </location>
</feature>
<feature type="zinc finger region" description="C2H2-type 3" evidence="1">
    <location>
        <begin position="476"/>
        <end position="498"/>
    </location>
</feature>
<feature type="zinc finger region" description="C2H2-type 4" evidence="1">
    <location>
        <begin position="504"/>
        <end position="527"/>
    </location>
</feature>
<feature type="zinc finger region" description="C2H2-type 5" evidence="1">
    <location>
        <begin position="533"/>
        <end position="555"/>
    </location>
</feature>
<feature type="zinc finger region" description="C2H2-type 6" evidence="1">
    <location>
        <begin position="561"/>
        <end position="583"/>
    </location>
</feature>
<feature type="region of interest" description="Involved in interaction with Cp190" evidence="4">
    <location>
        <begin position="161"/>
        <end position="194"/>
    </location>
</feature>
<feature type="region of interest" description="Involved in interaction with Cp190" evidence="4">
    <location>
        <begin position="294"/>
        <end position="319"/>
    </location>
</feature>
<feature type="sequence conflict" description="In Ref. 3; AAL13929." evidence="7" ref="3">
    <original>H</original>
    <variation>Y</variation>
    <location>
        <position position="573"/>
    </location>
</feature>
<organism evidence="11">
    <name type="scientific">Drosophila melanogaster</name>
    <name type="common">Fruit fly</name>
    <dbReference type="NCBI Taxonomy" id="7227"/>
    <lineage>
        <taxon>Eukaryota</taxon>
        <taxon>Metazoa</taxon>
        <taxon>Ecdysozoa</taxon>
        <taxon>Arthropoda</taxon>
        <taxon>Hexapoda</taxon>
        <taxon>Insecta</taxon>
        <taxon>Pterygota</taxon>
        <taxon>Neoptera</taxon>
        <taxon>Endopterygota</taxon>
        <taxon>Diptera</taxon>
        <taxon>Brachycera</taxon>
        <taxon>Muscomorpha</taxon>
        <taxon>Ephydroidea</taxon>
        <taxon>Drosophilidae</taxon>
        <taxon>Drosophila</taxon>
        <taxon>Sophophora</taxon>
    </lineage>
</organism>
<gene>
    <name evidence="5 10" type="primary">cliff</name>
    <name evidence="6" type="synonym">Mzfp1</name>
    <name evidence="10" type="ORF">CG1603</name>
</gene>
<protein>
    <recommendedName>
        <fullName evidence="6">Madf and zinc finger protein 1</fullName>
    </recommendedName>
    <alternativeName>
        <fullName evidence="5 10">Protein clifford</fullName>
    </alternativeName>
</protein>
<comment type="function">
    <text evidence="3 4">Chromatin-binding protein involved in the organization of active promoters and insulators (PubMed:38769058). Essential for the activity of heterochromatin promoters; primarily binds to specific motifs within promoters of housekeeping genes (PubMed:38769058). May also associate to a lesser extent with promoters in euchromatin (PubMed:38769058). Mediates recruitment of Cp190, a multifunctional protein involved in the recruitment of transcription complexes, the creation of open chromatin regions and the activity of insulators (PubMed:38769058). Cooperates with pita and su(Hw) to recruit Cp190 and regulate insulator function at the front-ultraabdominal (Fub) boundary (PubMed:38769058). May cooperate with other C2H2 zinc finger proteins, such as M1BP, to recruit CP190 to promoters (PubMed:38769058). May be involved in cellular organization and development of the eye (PubMed:37680216).</text>
</comment>
<comment type="subunit">
    <text evidence="4">Interacts (via regions flanking MADF domain 1) with Cp190 (via regions between the BTB domain and first zinc finger domain); the interaction is probably direct and is essential for protein function.</text>
</comment>
<comment type="interaction">
    <interactant intactId="EBI-104625">
        <id>Q1LZ24</id>
    </interactant>
    <interactant intactId="EBI-868840">
        <id>Q24478</id>
        <label>Cp190</label>
    </interactant>
    <organismsDiffer>false</organismsDiffer>
    <experiments>5</experiments>
</comment>
<comment type="subcellular location">
    <subcellularLocation>
        <location evidence="4">Nucleus</location>
    </subcellularLocation>
    <subcellularLocation>
        <location evidence="4">Chromosome</location>
    </subcellularLocation>
    <subcellularLocation>
        <location evidence="4">Nucleus</location>
        <location evidence="4">Nucleoplasm</location>
    </subcellularLocation>
    <text evidence="4">Binds to specific bands on both euchromatin and heterochromatin regions of polytene chromosomes (PubMed:38769058). Roughly equally distributed between chromatin and the nucleoplasm (PubMed:38769058).</text>
</comment>
<comment type="domain">
    <text evidence="4">Possesses 2 MADF domains, the negatively charged MADF1 and the positively charged MADF2 (PubMed:38769058). Both MADF domains are essential for protein function (PubMed:38769058). MADF2 is important for recruitment to heterochromatin and may mediate interaction with other proteins (PubMed:38769058).</text>
</comment>
<comment type="domain">
    <text evidence="4">Possesses a C-terminal cluster of 6 C2H2-type zinc fingers (PubMed:38769058). This cluster of zinc fingers is essential for protein function and sufficient for recognition and binding of specific DNA motifs in chromatin (PubMed:38769058).</text>
</comment>
<comment type="disruption phenotype">
    <text evidence="3 4">Larval lethal in 2nd to 3rd instar stage (PubMed:38769058). RNAi-mediated knockdown in the eye results in adults with the rough eye phenotype and misaligned ommatidia (PubMed:37680216).</text>
</comment>
<comment type="miscellaneous">
    <text evidence="5">The overgrowth of red pigmented tissue in the eyes of mutant flies is reminiscent of 'Clifford the Big Red Dog', a character from an American children's book.</text>
</comment>
<name>CLIFF_DROME</name>
<evidence type="ECO:0000255" key="1">
    <source>
        <dbReference type="PROSITE-ProRule" id="PRU00042"/>
    </source>
</evidence>
<evidence type="ECO:0000255" key="2">
    <source>
        <dbReference type="PROSITE-ProRule" id="PRU00372"/>
    </source>
</evidence>
<evidence type="ECO:0000269" key="3">
    <source>
    </source>
</evidence>
<evidence type="ECO:0000269" key="4">
    <source>
    </source>
</evidence>
<evidence type="ECO:0000303" key="5">
    <source>
    </source>
</evidence>
<evidence type="ECO:0000303" key="6">
    <source>
    </source>
</evidence>
<evidence type="ECO:0000305" key="7"/>
<evidence type="ECO:0000312" key="8">
    <source>
        <dbReference type="EMBL" id="AAL13929.1"/>
    </source>
</evidence>
<evidence type="ECO:0000312" key="9">
    <source>
        <dbReference type="EMBL" id="ABF17893.1"/>
    </source>
</evidence>
<evidence type="ECO:0000312" key="10">
    <source>
        <dbReference type="FlyBase" id="FBgn0033185"/>
    </source>
</evidence>
<evidence type="ECO:0000312" key="11">
    <source>
        <dbReference type="Proteomes" id="UP000000803"/>
    </source>
</evidence>
<sequence length="586" mass="68326">MELCGNVMTNSKYEMFRLKCLYCSIESELKDWELFIVHVKSAHYCEDEDVRINEIKEDTEELYSVVDAADPAIAYGPDEFFEVIENSNGVDQWMEADSKDIQYEEDATAWSAATNNSWEFGPGGSSLELPAGKEVTQMDESSQNHIPLNTDDDDVDCSDFFMSEDDLAPPRKPGRPPRRTRPGQVFKFKVSFIRSNPRVLHLIQAYKEHPCLWNPSDEHYQDEPARSMAYEAIMERMDRKANVLFTVEELKKTLEQLHVQYTLALETKQRGKLVGLAARYFAKCEFLSVAPVVTPRENEEDNDLTAIKLNFKEENLITTSFIETYANYPVLYNQALPDFGSIEIRADAFKRMAKEFQPVVKANETDVYIAVNKLRRWLYDAIRRLKSKELIQKCSKQEVQYLQMCSFLPAKGSESQVLYCDYCDKRFHGDYNLRVHIVKAHEVGDLPYLCSFCPRRFDRHVDMDRHKLRSHFERKLKCQYCEKSFAVDTDLKVHTLIHTGERPHVCDICGKTFRLKLLLDHHVNGVHLNIRPYSCNMCTKTFRKKFELANHIKGHLNIRDKKCEYCDATFYDHSSLSRHRRSHRSE</sequence>
<dbReference type="EMBL" id="AE013599">
    <property type="protein sequence ID" value="AAF59239.1"/>
    <property type="molecule type" value="Genomic_DNA"/>
</dbReference>
<dbReference type="EMBL" id="AE013599">
    <property type="protein sequence ID" value="AGB93311.1"/>
    <property type="molecule type" value="Genomic_DNA"/>
</dbReference>
<dbReference type="EMBL" id="AY058700">
    <property type="protein sequence ID" value="AAL13929.1"/>
    <property type="molecule type" value="mRNA"/>
</dbReference>
<dbReference type="EMBL" id="BT025202">
    <property type="protein sequence ID" value="ABF17893.1"/>
    <property type="molecule type" value="mRNA"/>
</dbReference>
<dbReference type="RefSeq" id="NP_001260778.1">
    <property type="nucleotide sequence ID" value="NM_001273849.1"/>
</dbReference>
<dbReference type="RefSeq" id="NP_610290.2">
    <property type="nucleotide sequence ID" value="NM_136446.3"/>
</dbReference>
<dbReference type="SMR" id="Q1LZ24"/>
<dbReference type="FunCoup" id="Q1LZ24">
    <property type="interactions" value="283"/>
</dbReference>
<dbReference type="IntAct" id="Q1LZ24">
    <property type="interactions" value="14"/>
</dbReference>
<dbReference type="STRING" id="7227.FBpp0307862"/>
<dbReference type="PaxDb" id="7227-FBpp0088052"/>
<dbReference type="DNASU" id="35683"/>
<dbReference type="EnsemblMetazoa" id="FBtr0088979">
    <property type="protein sequence ID" value="FBpp0088052"/>
    <property type="gene ID" value="FBgn0033185"/>
</dbReference>
<dbReference type="EnsemblMetazoa" id="FBtr0336925">
    <property type="protein sequence ID" value="FBpp0307862"/>
    <property type="gene ID" value="FBgn0033185"/>
</dbReference>
<dbReference type="GeneID" id="35683"/>
<dbReference type="KEGG" id="dme:Dmel_CG1603"/>
<dbReference type="UCSC" id="CG1603-RA">
    <property type="organism name" value="d. melanogaster"/>
</dbReference>
<dbReference type="AGR" id="FB:FBgn0033185"/>
<dbReference type="FlyBase" id="FBgn0033185">
    <property type="gene designation" value="cliff"/>
</dbReference>
<dbReference type="VEuPathDB" id="VectorBase:FBgn0033185"/>
<dbReference type="eggNOG" id="KOG1721">
    <property type="taxonomic scope" value="Eukaryota"/>
</dbReference>
<dbReference type="GeneTree" id="ENSGT00940000169957"/>
<dbReference type="HOGENOM" id="CLU_027532_1_0_1"/>
<dbReference type="OMA" id="HINGFHL"/>
<dbReference type="OrthoDB" id="8117402at2759"/>
<dbReference type="BioGRID-ORCS" id="35683">
    <property type="hits" value="1 hit in 1 CRISPR screen"/>
</dbReference>
<dbReference type="Proteomes" id="UP000000803">
    <property type="component" value="Chromosome 2R"/>
</dbReference>
<dbReference type="Bgee" id="FBgn0033185">
    <property type="expression patterns" value="Expressed in cleaving embryo and 35 other cell types or tissues"/>
</dbReference>
<dbReference type="ExpressionAtlas" id="Q1LZ24">
    <property type="expression patterns" value="baseline and differential"/>
</dbReference>
<dbReference type="GO" id="GO:0000785">
    <property type="term" value="C:chromatin"/>
    <property type="evidence" value="ECO:0000314"/>
    <property type="project" value="UniProtKB"/>
</dbReference>
<dbReference type="GO" id="GO:0005654">
    <property type="term" value="C:nucleoplasm"/>
    <property type="evidence" value="ECO:0000314"/>
    <property type="project" value="UniProtKB"/>
</dbReference>
<dbReference type="GO" id="GO:0005634">
    <property type="term" value="C:nucleus"/>
    <property type="evidence" value="ECO:0000250"/>
    <property type="project" value="FlyBase"/>
</dbReference>
<dbReference type="GO" id="GO:0043035">
    <property type="term" value="F:chromatin insulator sequence binding"/>
    <property type="evidence" value="ECO:0000314"/>
    <property type="project" value="UniProtKB"/>
</dbReference>
<dbReference type="GO" id="GO:1990841">
    <property type="term" value="F:promoter-specific chromatin binding"/>
    <property type="evidence" value="ECO:0000314"/>
    <property type="project" value="UniProtKB"/>
</dbReference>
<dbReference type="GO" id="GO:0043565">
    <property type="term" value="F:sequence-specific DNA binding"/>
    <property type="evidence" value="ECO:0000314"/>
    <property type="project" value="UniProtKB"/>
</dbReference>
<dbReference type="GO" id="GO:0008270">
    <property type="term" value="F:zinc ion binding"/>
    <property type="evidence" value="ECO:0007669"/>
    <property type="project" value="UniProtKB-KW"/>
</dbReference>
<dbReference type="GO" id="GO:0006325">
    <property type="term" value="P:chromatin organization"/>
    <property type="evidence" value="ECO:0007669"/>
    <property type="project" value="UniProtKB-KW"/>
</dbReference>
<dbReference type="GO" id="GO:0045944">
    <property type="term" value="P:positive regulation of transcription by RNA polymerase II"/>
    <property type="evidence" value="ECO:0000314"/>
    <property type="project" value="UniProtKB"/>
</dbReference>
<dbReference type="FunFam" id="3.30.160.60:FF:000902">
    <property type="entry name" value="Zinc finger protein 445"/>
    <property type="match status" value="1"/>
</dbReference>
<dbReference type="Gene3D" id="3.30.160.60">
    <property type="entry name" value="Classic Zinc Finger"/>
    <property type="match status" value="4"/>
</dbReference>
<dbReference type="InterPro" id="IPR006578">
    <property type="entry name" value="MADF-dom"/>
</dbReference>
<dbReference type="InterPro" id="IPR036236">
    <property type="entry name" value="Znf_C2H2_sf"/>
</dbReference>
<dbReference type="InterPro" id="IPR013087">
    <property type="entry name" value="Znf_C2H2_type"/>
</dbReference>
<dbReference type="PANTHER" id="PTHR24379:SF127">
    <property type="entry name" value="BLOODY FINGERS-RELATED"/>
    <property type="match status" value="1"/>
</dbReference>
<dbReference type="PANTHER" id="PTHR24379">
    <property type="entry name" value="KRAB AND ZINC FINGER DOMAIN-CONTAINING"/>
    <property type="match status" value="1"/>
</dbReference>
<dbReference type="Pfam" id="PF10545">
    <property type="entry name" value="MADF_DNA_bdg"/>
    <property type="match status" value="2"/>
</dbReference>
<dbReference type="Pfam" id="PF00096">
    <property type="entry name" value="zf-C2H2"/>
    <property type="match status" value="2"/>
</dbReference>
<dbReference type="SMART" id="SM00595">
    <property type="entry name" value="MADF"/>
    <property type="match status" value="2"/>
</dbReference>
<dbReference type="SMART" id="SM00355">
    <property type="entry name" value="ZnF_C2H2"/>
    <property type="match status" value="7"/>
</dbReference>
<dbReference type="SUPFAM" id="SSF57667">
    <property type="entry name" value="beta-beta-alpha zinc fingers"/>
    <property type="match status" value="3"/>
</dbReference>
<dbReference type="PROSITE" id="PS51029">
    <property type="entry name" value="MADF"/>
    <property type="match status" value="2"/>
</dbReference>
<dbReference type="PROSITE" id="PS00028">
    <property type="entry name" value="ZINC_FINGER_C2H2_1"/>
    <property type="match status" value="6"/>
</dbReference>
<dbReference type="PROSITE" id="PS50157">
    <property type="entry name" value="ZINC_FINGER_C2H2_2"/>
    <property type="match status" value="5"/>
</dbReference>
<keyword id="KW-0156">Chromatin regulator</keyword>
<keyword id="KW-0158">Chromosome</keyword>
<keyword id="KW-0238">DNA-binding</keyword>
<keyword id="KW-0479">Metal-binding</keyword>
<keyword id="KW-0539">Nucleus</keyword>
<keyword id="KW-1185">Reference proteome</keyword>
<keyword id="KW-0677">Repeat</keyword>
<keyword id="KW-0862">Zinc</keyword>
<keyword id="KW-0863">Zinc-finger</keyword>
<accession>Q1LZ24</accession>
<accession>Q95TL6</accession>
<proteinExistence type="evidence at protein level"/>
<reference evidence="11" key="1">
    <citation type="journal article" date="2000" name="Science">
        <title>The genome sequence of Drosophila melanogaster.</title>
        <authorList>
            <person name="Adams M.D."/>
            <person name="Celniker S.E."/>
            <person name="Holt R.A."/>
            <person name="Evans C.A."/>
            <person name="Gocayne J.D."/>
            <person name="Amanatides P.G."/>
            <person name="Scherer S.E."/>
            <person name="Li P.W."/>
            <person name="Hoskins R.A."/>
            <person name="Galle R.F."/>
            <person name="George R.A."/>
            <person name="Lewis S.E."/>
            <person name="Richards S."/>
            <person name="Ashburner M."/>
            <person name="Henderson S.N."/>
            <person name="Sutton G.G."/>
            <person name="Wortman J.R."/>
            <person name="Yandell M.D."/>
            <person name="Zhang Q."/>
            <person name="Chen L.X."/>
            <person name="Brandon R.C."/>
            <person name="Rogers Y.-H.C."/>
            <person name="Blazej R.G."/>
            <person name="Champe M."/>
            <person name="Pfeiffer B.D."/>
            <person name="Wan K.H."/>
            <person name="Doyle C."/>
            <person name="Baxter E.G."/>
            <person name="Helt G."/>
            <person name="Nelson C.R."/>
            <person name="Miklos G.L.G."/>
            <person name="Abril J.F."/>
            <person name="Agbayani A."/>
            <person name="An H.-J."/>
            <person name="Andrews-Pfannkoch C."/>
            <person name="Baldwin D."/>
            <person name="Ballew R.M."/>
            <person name="Basu A."/>
            <person name="Baxendale J."/>
            <person name="Bayraktaroglu L."/>
            <person name="Beasley E.M."/>
            <person name="Beeson K.Y."/>
            <person name="Benos P.V."/>
            <person name="Berman B.P."/>
            <person name="Bhandari D."/>
            <person name="Bolshakov S."/>
            <person name="Borkova D."/>
            <person name="Botchan M.R."/>
            <person name="Bouck J."/>
            <person name="Brokstein P."/>
            <person name="Brottier P."/>
            <person name="Burtis K.C."/>
            <person name="Busam D.A."/>
            <person name="Butler H."/>
            <person name="Cadieu E."/>
            <person name="Center A."/>
            <person name="Chandra I."/>
            <person name="Cherry J.M."/>
            <person name="Cawley S."/>
            <person name="Dahlke C."/>
            <person name="Davenport L.B."/>
            <person name="Davies P."/>
            <person name="de Pablos B."/>
            <person name="Delcher A."/>
            <person name="Deng Z."/>
            <person name="Mays A.D."/>
            <person name="Dew I."/>
            <person name="Dietz S.M."/>
            <person name="Dodson K."/>
            <person name="Doup L.E."/>
            <person name="Downes M."/>
            <person name="Dugan-Rocha S."/>
            <person name="Dunkov B.C."/>
            <person name="Dunn P."/>
            <person name="Durbin K.J."/>
            <person name="Evangelista C.C."/>
            <person name="Ferraz C."/>
            <person name="Ferriera S."/>
            <person name="Fleischmann W."/>
            <person name="Fosler C."/>
            <person name="Gabrielian A.E."/>
            <person name="Garg N.S."/>
            <person name="Gelbart W.M."/>
            <person name="Glasser K."/>
            <person name="Glodek A."/>
            <person name="Gong F."/>
            <person name="Gorrell J.H."/>
            <person name="Gu Z."/>
            <person name="Guan P."/>
            <person name="Harris M."/>
            <person name="Harris N.L."/>
            <person name="Harvey D.A."/>
            <person name="Heiman T.J."/>
            <person name="Hernandez J.R."/>
            <person name="Houck J."/>
            <person name="Hostin D."/>
            <person name="Houston K.A."/>
            <person name="Howland T.J."/>
            <person name="Wei M.-H."/>
            <person name="Ibegwam C."/>
            <person name="Jalali M."/>
            <person name="Kalush F."/>
            <person name="Karpen G.H."/>
            <person name="Ke Z."/>
            <person name="Kennison J.A."/>
            <person name="Ketchum K.A."/>
            <person name="Kimmel B.E."/>
            <person name="Kodira C.D."/>
            <person name="Kraft C.L."/>
            <person name="Kravitz S."/>
            <person name="Kulp D."/>
            <person name="Lai Z."/>
            <person name="Lasko P."/>
            <person name="Lei Y."/>
            <person name="Levitsky A.A."/>
            <person name="Li J.H."/>
            <person name="Li Z."/>
            <person name="Liang Y."/>
            <person name="Lin X."/>
            <person name="Liu X."/>
            <person name="Mattei B."/>
            <person name="McIntosh T.C."/>
            <person name="McLeod M.P."/>
            <person name="McPherson D."/>
            <person name="Merkulov G."/>
            <person name="Milshina N.V."/>
            <person name="Mobarry C."/>
            <person name="Morris J."/>
            <person name="Moshrefi A."/>
            <person name="Mount S.M."/>
            <person name="Moy M."/>
            <person name="Murphy B."/>
            <person name="Murphy L."/>
            <person name="Muzny D.M."/>
            <person name="Nelson D.L."/>
            <person name="Nelson D.R."/>
            <person name="Nelson K.A."/>
            <person name="Nixon K."/>
            <person name="Nusskern D.R."/>
            <person name="Pacleb J.M."/>
            <person name="Palazzolo M."/>
            <person name="Pittman G.S."/>
            <person name="Pan S."/>
            <person name="Pollard J."/>
            <person name="Puri V."/>
            <person name="Reese M.G."/>
            <person name="Reinert K."/>
            <person name="Remington K."/>
            <person name="Saunders R.D.C."/>
            <person name="Scheeler F."/>
            <person name="Shen H."/>
            <person name="Shue B.C."/>
            <person name="Siden-Kiamos I."/>
            <person name="Simpson M."/>
            <person name="Skupski M.P."/>
            <person name="Smith T.J."/>
            <person name="Spier E."/>
            <person name="Spradling A.C."/>
            <person name="Stapleton M."/>
            <person name="Strong R."/>
            <person name="Sun E."/>
            <person name="Svirskas R."/>
            <person name="Tector C."/>
            <person name="Turner R."/>
            <person name="Venter E."/>
            <person name="Wang A.H."/>
            <person name="Wang X."/>
            <person name="Wang Z.-Y."/>
            <person name="Wassarman D.A."/>
            <person name="Weinstock G.M."/>
            <person name="Weissenbach J."/>
            <person name="Williams S.M."/>
            <person name="Woodage T."/>
            <person name="Worley K.C."/>
            <person name="Wu D."/>
            <person name="Yang S."/>
            <person name="Yao Q.A."/>
            <person name="Ye J."/>
            <person name="Yeh R.-F."/>
            <person name="Zaveri J.S."/>
            <person name="Zhan M."/>
            <person name="Zhang G."/>
            <person name="Zhao Q."/>
            <person name="Zheng L."/>
            <person name="Zheng X.H."/>
            <person name="Zhong F.N."/>
            <person name="Zhong W."/>
            <person name="Zhou X."/>
            <person name="Zhu S.C."/>
            <person name="Zhu X."/>
            <person name="Smith H.O."/>
            <person name="Gibbs R.A."/>
            <person name="Myers E.W."/>
            <person name="Rubin G.M."/>
            <person name="Venter J.C."/>
        </authorList>
    </citation>
    <scope>NUCLEOTIDE SEQUENCE [LARGE SCALE GENOMIC DNA]</scope>
    <source>
        <strain evidence="11">Berkeley</strain>
    </source>
</reference>
<reference evidence="11" key="2">
    <citation type="journal article" date="2002" name="Genome Biol.">
        <title>Annotation of the Drosophila melanogaster euchromatic genome: a systematic review.</title>
        <authorList>
            <person name="Misra S."/>
            <person name="Crosby M.A."/>
            <person name="Mungall C.J."/>
            <person name="Matthews B.B."/>
            <person name="Campbell K.S."/>
            <person name="Hradecky P."/>
            <person name="Huang Y."/>
            <person name="Kaminker J.S."/>
            <person name="Millburn G.H."/>
            <person name="Prochnik S.E."/>
            <person name="Smith C.D."/>
            <person name="Tupy J.L."/>
            <person name="Whitfield E.J."/>
            <person name="Bayraktaroglu L."/>
            <person name="Berman B.P."/>
            <person name="Bettencourt B.R."/>
            <person name="Celniker S.E."/>
            <person name="de Grey A.D.N.J."/>
            <person name="Drysdale R.A."/>
            <person name="Harris N.L."/>
            <person name="Richter J."/>
            <person name="Russo S."/>
            <person name="Schroeder A.J."/>
            <person name="Shu S.Q."/>
            <person name="Stapleton M."/>
            <person name="Yamada C."/>
            <person name="Ashburner M."/>
            <person name="Gelbart W.M."/>
            <person name="Rubin G.M."/>
            <person name="Lewis S.E."/>
        </authorList>
    </citation>
    <scope>GENOME REANNOTATION</scope>
    <source>
        <strain evidence="11">Berkeley</strain>
    </source>
</reference>
<reference evidence="8" key="3">
    <citation type="journal article" date="2002" name="Genome Biol.">
        <title>A Drosophila full-length cDNA resource.</title>
        <authorList>
            <person name="Stapleton M."/>
            <person name="Carlson J.W."/>
            <person name="Brokstein P."/>
            <person name="Yu C."/>
            <person name="Champe M."/>
            <person name="George R.A."/>
            <person name="Guarin H."/>
            <person name="Kronmiller B."/>
            <person name="Pacleb J.M."/>
            <person name="Park S."/>
            <person name="Wan K.H."/>
            <person name="Rubin G.M."/>
            <person name="Celniker S.E."/>
        </authorList>
    </citation>
    <scope>NUCLEOTIDE SEQUENCE [LARGE SCALE MRNA]</scope>
    <source>
        <strain evidence="8">Berkeley</strain>
        <tissue evidence="8">Embryo</tissue>
    </source>
</reference>
<reference evidence="9" key="4">
    <citation type="submission" date="2006-10" db="EMBL/GenBank/DDBJ databases">
        <authorList>
            <person name="Stapleton M."/>
            <person name="Carlson J."/>
            <person name="Frise E."/>
            <person name="Kapadia B."/>
            <person name="Park S."/>
            <person name="Wan K."/>
            <person name="Yu C."/>
            <person name="Celniker S."/>
        </authorList>
    </citation>
    <scope>NUCLEOTIDE SEQUENCE [LARGE SCALE MRNA]</scope>
    <source>
        <strain evidence="9">Berkeley</strain>
    </source>
</reference>
<reference evidence="7" key="5">
    <citation type="journal article" date="2023" name="MicroPubl. Biol.">
        <title>clifford B.4.1, an allele of CG1603, causes tissue overgrowth in the Drosophila melanogaster eye.</title>
        <authorList>
            <person name="Nowaskie R.R."/>
            <person name="Kitch A."/>
            <person name="Adams A."/>
            <person name="Anandaraj A."/>
            <person name="Apawan E."/>
            <person name="Banuelos L."/>
            <person name="Betz C.J."/>
            <person name="Bogunia J.M."/>
            <person name="Buechlein N."/>
            <person name="Burns M.R."/>
            <person name="Collier H.A."/>
            <person name="Collins Z."/>
            <person name="Combs K."/>
            <person name="Dakarian V.D."/>
            <person name="Daniel A."/>
            <person name="De Jesus Iii C.M."/>
            <person name="Erickson J.D."/>
            <person name="Estrada B."/>
            <person name="Estrada K."/>
            <person name="Fields S."/>
            <person name="Gabriel M."/>
            <person name="Garcia R.M."/>
            <person name="Gitamo S."/>
            <person name="Granath E."/>
            <person name="Hardin S.N."/>
            <person name="Hattling E."/>
            <person name="Henriquez A.V."/>
            <person name="Hernandez D."/>
            <person name="Johnson L."/>
            <person name="Kim A.H."/>
            <person name="Kolley L.K."/>
            <person name="Larue K.M."/>
            <person name="Lockwood E."/>
            <person name="Longoria N."/>
            <person name="Lopez C."/>
            <person name="Lopez-Roca Fernandez R.C."/>
            <person name="Lozano S."/>
            <person name="Manthie C."/>
            <person name="May T."/>
            <person name="Mehrzad Z."/>
            <person name="Mendoza I."/>
            <person name="Mohan S."/>
            <person name="Mounthachak C."/>
            <person name="Muyizere M."/>
            <person name="Myers M.R."/>
            <person name="Newton J."/>
            <person name="Nwawueze A."/>
            <person name="Paredes A.J."/>
            <person name="Pezdek M.N."/>
            <person name="Phat Nguyen H."/>
            <person name="Pobuda N."/>
            <person name="Sadat S."/>
            <person name="Sailor J.J."/>
            <person name="Santiago D."/>
            <person name="Sbarbaro M."/>
            <person name="Schultz Iii D.E."/>
            <person name="Senobari A.N."/>
            <person name="Shouse E.M."/>
            <person name="Snarski S.M."/>
            <person name="Solano E."/>
            <person name="Solis Campos N."/>
            <person name="Stewart E."/>
            <person name="Szczepaniak J."/>
            <person name="Tejeda M."/>
            <person name="Teoli D.F."/>
            <person name="Tran M."/>
            <person name="Trivedi N."/>
            <person name="Uribe Aristizabal L."/>
            <person name="Vargas B.Z."/>
            <person name="Walker Iii K.W."/>
            <person name="Wasiqi J."/>
            <person name="Wong J."/>
            <person name="Zachrel A."/>
            <person name="Shah H.P."/>
            <person name="Small E."/>
            <person name="Watts C.T."/>
            <person name="Croonquist P."/>
            <person name="Devergne O."/>
            <person name="Jones A.K."/>
            <person name="Taylor E.E."/>
            <person name="Kagey J.D."/>
            <person name="Merkle J.A."/>
        </authorList>
    </citation>
    <scope>FUNCTION</scope>
    <scope>DISRUPTION PHENOTYPE</scope>
</reference>
<reference evidence="7" key="6">
    <citation type="journal article" date="2024" name="Nucleic Acids Res.">
        <title>New Drosophila promoter-associated architectural protein Mzfp1 interacts with CP190 and is required for housekeeping gene expression and insulator activity.</title>
        <authorList>
            <person name="Sokolov V."/>
            <person name="Kyrchanova O."/>
            <person name="Klimenko N."/>
            <person name="Fedotova A."/>
            <person name="Ibragimov A."/>
            <person name="Maksimenko O."/>
            <person name="Georgiev P."/>
        </authorList>
    </citation>
    <scope>FUNCTION</scope>
    <scope>INTERACTION WITH CP190</scope>
    <scope>SUBCELLULAR LOCATION</scope>
    <scope>MADF AND ZN-FINGER DOMAINS</scope>
    <scope>DISRUPTION PHENOTYPE</scope>
</reference>